<reference key="1">
    <citation type="journal article" date="2002" name="Proc. Natl. Acad. Sci. U.S.A.">
        <title>Complete genome sequence and comparative genomic analysis of an emerging human pathogen, serotype V Streptococcus agalactiae.</title>
        <authorList>
            <person name="Tettelin H."/>
            <person name="Masignani V."/>
            <person name="Cieslewicz M.J."/>
            <person name="Eisen J.A."/>
            <person name="Peterson S.N."/>
            <person name="Wessels M.R."/>
            <person name="Paulsen I.T."/>
            <person name="Nelson K.E."/>
            <person name="Margarit I."/>
            <person name="Read T.D."/>
            <person name="Madoff L.C."/>
            <person name="Wolf A.M."/>
            <person name="Beanan M.J."/>
            <person name="Brinkac L.M."/>
            <person name="Daugherty S.C."/>
            <person name="DeBoy R.T."/>
            <person name="Durkin A.S."/>
            <person name="Kolonay J.F."/>
            <person name="Madupu R."/>
            <person name="Lewis M.R."/>
            <person name="Radune D."/>
            <person name="Fedorova N.B."/>
            <person name="Scanlan D."/>
            <person name="Khouri H.M."/>
            <person name="Mulligan S."/>
            <person name="Carty H.A."/>
            <person name="Cline R.T."/>
            <person name="Van Aken S.E."/>
            <person name="Gill J."/>
            <person name="Scarselli M."/>
            <person name="Mora M."/>
            <person name="Iacobini E.T."/>
            <person name="Brettoni C."/>
            <person name="Galli G."/>
            <person name="Mariani M."/>
            <person name="Vegni F."/>
            <person name="Maione D."/>
            <person name="Rinaudo D."/>
            <person name="Rappuoli R."/>
            <person name="Telford J.L."/>
            <person name="Kasper D.L."/>
            <person name="Grandi G."/>
            <person name="Fraser C.M."/>
        </authorList>
    </citation>
    <scope>NUCLEOTIDE SEQUENCE [LARGE SCALE GENOMIC DNA]</scope>
    <source>
        <strain>ATCC BAA-611 / 2603 V/R</strain>
    </source>
</reference>
<proteinExistence type="inferred from homology"/>
<keyword id="KW-0067">ATP-binding</keyword>
<keyword id="KW-0436">Ligase</keyword>
<keyword id="KW-0547">Nucleotide-binding</keyword>
<keyword id="KW-0648">Protein biosynthesis</keyword>
<keyword id="KW-1185">Reference proteome</keyword>
<evidence type="ECO:0000255" key="1">
    <source>
        <dbReference type="HAMAP-Rule" id="MF_00120"/>
    </source>
</evidence>
<accession>Q8DY25</accession>
<gene>
    <name evidence="1" type="primary">gatA</name>
    <name type="ordered locus">SAG1668</name>
</gene>
<dbReference type="EC" id="6.3.5.7" evidence="1"/>
<dbReference type="EMBL" id="AE009948">
    <property type="protein sequence ID" value="AAN00532.1"/>
    <property type="molecule type" value="Genomic_DNA"/>
</dbReference>
<dbReference type="RefSeq" id="NP_688659.1">
    <property type="nucleotide sequence ID" value="NC_004116.1"/>
</dbReference>
<dbReference type="RefSeq" id="WP_000009529.1">
    <property type="nucleotide sequence ID" value="NC_004116.1"/>
</dbReference>
<dbReference type="SMR" id="Q8DY25"/>
<dbReference type="STRING" id="208435.SAG1668"/>
<dbReference type="GeneID" id="66886514"/>
<dbReference type="KEGG" id="sag:SAG1668"/>
<dbReference type="PATRIC" id="fig|208435.3.peg.1677"/>
<dbReference type="HOGENOM" id="CLU_009600_0_3_9"/>
<dbReference type="OrthoDB" id="9811471at2"/>
<dbReference type="Proteomes" id="UP000000821">
    <property type="component" value="Chromosome"/>
</dbReference>
<dbReference type="GO" id="GO:0030956">
    <property type="term" value="C:glutamyl-tRNA(Gln) amidotransferase complex"/>
    <property type="evidence" value="ECO:0007669"/>
    <property type="project" value="InterPro"/>
</dbReference>
<dbReference type="GO" id="GO:0005524">
    <property type="term" value="F:ATP binding"/>
    <property type="evidence" value="ECO:0007669"/>
    <property type="project" value="UniProtKB-KW"/>
</dbReference>
<dbReference type="GO" id="GO:0050567">
    <property type="term" value="F:glutaminyl-tRNA synthase (glutamine-hydrolyzing) activity"/>
    <property type="evidence" value="ECO:0007669"/>
    <property type="project" value="UniProtKB-UniRule"/>
</dbReference>
<dbReference type="GO" id="GO:0006412">
    <property type="term" value="P:translation"/>
    <property type="evidence" value="ECO:0007669"/>
    <property type="project" value="UniProtKB-UniRule"/>
</dbReference>
<dbReference type="Gene3D" id="3.90.1300.10">
    <property type="entry name" value="Amidase signature (AS) domain"/>
    <property type="match status" value="1"/>
</dbReference>
<dbReference type="HAMAP" id="MF_00120">
    <property type="entry name" value="GatA"/>
    <property type="match status" value="1"/>
</dbReference>
<dbReference type="InterPro" id="IPR000120">
    <property type="entry name" value="Amidase"/>
</dbReference>
<dbReference type="InterPro" id="IPR020556">
    <property type="entry name" value="Amidase_CS"/>
</dbReference>
<dbReference type="InterPro" id="IPR023631">
    <property type="entry name" value="Amidase_dom"/>
</dbReference>
<dbReference type="InterPro" id="IPR036928">
    <property type="entry name" value="AS_sf"/>
</dbReference>
<dbReference type="InterPro" id="IPR004412">
    <property type="entry name" value="GatA"/>
</dbReference>
<dbReference type="NCBIfam" id="TIGR00132">
    <property type="entry name" value="gatA"/>
    <property type="match status" value="1"/>
</dbReference>
<dbReference type="PANTHER" id="PTHR11895:SF151">
    <property type="entry name" value="GLUTAMYL-TRNA(GLN) AMIDOTRANSFERASE SUBUNIT A"/>
    <property type="match status" value="1"/>
</dbReference>
<dbReference type="PANTHER" id="PTHR11895">
    <property type="entry name" value="TRANSAMIDASE"/>
    <property type="match status" value="1"/>
</dbReference>
<dbReference type="Pfam" id="PF01425">
    <property type="entry name" value="Amidase"/>
    <property type="match status" value="1"/>
</dbReference>
<dbReference type="SUPFAM" id="SSF75304">
    <property type="entry name" value="Amidase signature (AS) enzymes"/>
    <property type="match status" value="1"/>
</dbReference>
<dbReference type="PROSITE" id="PS00571">
    <property type="entry name" value="AMIDASES"/>
    <property type="match status" value="1"/>
</dbReference>
<sequence>MSFNNQSIDQLHDFLVKKEISATELTKATLEDIHAREQAVGSFITISDEMAIAQAKEIDDKGIDADNVMSGIPLAVKDNISTKGILTTAASKMLYNYEPIFDATAVEKLYAKDMIVIGKANMDEFAMGGSTETSYFKKTNNAWDHSKVPGGSSGGSAAAVASGQVRLSLGSDTGGSIRQPASFNGIVGMKPTYGRVSRFGLFAFGSSLDQIGPMSQTVKENAQLLTVISGHDVRDSTSSERTVGDFTAKIGQDIQGMKIALPKEYLGEGIAQGVKETIIKAAKHLEKLGAVIEEVSLPHSKYGVAVYYIVASSEASSNLQRFDGIRYGYRTENYKNLDDIYVNTRSEGFGDEVKRRIMLGTFSLSSGYYDAYYKKAGQVRSLIIQDFEKVFADYDLILGPTAPTTAFDLDSLNHDPVAMYLADILTIPVNLAGLPGISIPAGFDQGLPVGMQLIGPKFSEETIYQVAAAFEATTDYHKQQPKIFGGEN</sequence>
<name>GATA_STRA5</name>
<feature type="chain" id="PRO_0000105208" description="Glutamyl-tRNA(Gln) amidotransferase subunit A">
    <location>
        <begin position="1"/>
        <end position="488"/>
    </location>
</feature>
<feature type="active site" description="Charge relay system" evidence="1">
    <location>
        <position position="77"/>
    </location>
</feature>
<feature type="active site" description="Charge relay system" evidence="1">
    <location>
        <position position="152"/>
    </location>
</feature>
<feature type="active site" description="Acyl-ester intermediate" evidence="1">
    <location>
        <position position="176"/>
    </location>
</feature>
<protein>
    <recommendedName>
        <fullName evidence="1">Glutamyl-tRNA(Gln) amidotransferase subunit A</fullName>
        <shortName evidence="1">Glu-ADT subunit A</shortName>
        <ecNumber evidence="1">6.3.5.7</ecNumber>
    </recommendedName>
</protein>
<organism>
    <name type="scientific">Streptococcus agalactiae serotype V (strain ATCC BAA-611 / 2603 V/R)</name>
    <dbReference type="NCBI Taxonomy" id="208435"/>
    <lineage>
        <taxon>Bacteria</taxon>
        <taxon>Bacillati</taxon>
        <taxon>Bacillota</taxon>
        <taxon>Bacilli</taxon>
        <taxon>Lactobacillales</taxon>
        <taxon>Streptococcaceae</taxon>
        <taxon>Streptococcus</taxon>
    </lineage>
</organism>
<comment type="function">
    <text evidence="1">Allows the formation of correctly charged Gln-tRNA(Gln) through the transamidation of misacylated Glu-tRNA(Gln) in organisms which lack glutaminyl-tRNA synthetase. The reaction takes place in the presence of glutamine and ATP through an activated gamma-phospho-Glu-tRNA(Gln).</text>
</comment>
<comment type="catalytic activity">
    <reaction evidence="1">
        <text>L-glutamyl-tRNA(Gln) + L-glutamine + ATP + H2O = L-glutaminyl-tRNA(Gln) + L-glutamate + ADP + phosphate + H(+)</text>
        <dbReference type="Rhea" id="RHEA:17521"/>
        <dbReference type="Rhea" id="RHEA-COMP:9681"/>
        <dbReference type="Rhea" id="RHEA-COMP:9684"/>
        <dbReference type="ChEBI" id="CHEBI:15377"/>
        <dbReference type="ChEBI" id="CHEBI:15378"/>
        <dbReference type="ChEBI" id="CHEBI:29985"/>
        <dbReference type="ChEBI" id="CHEBI:30616"/>
        <dbReference type="ChEBI" id="CHEBI:43474"/>
        <dbReference type="ChEBI" id="CHEBI:58359"/>
        <dbReference type="ChEBI" id="CHEBI:78520"/>
        <dbReference type="ChEBI" id="CHEBI:78521"/>
        <dbReference type="ChEBI" id="CHEBI:456216"/>
        <dbReference type="EC" id="6.3.5.7"/>
    </reaction>
</comment>
<comment type="subunit">
    <text evidence="1">Heterotrimer of A, B and C subunits.</text>
</comment>
<comment type="similarity">
    <text evidence="1">Belongs to the amidase family. GatA subfamily.</text>
</comment>